<reference key="1">
    <citation type="journal article" date="2004" name="J. Mol. Evol.">
        <title>Episodic molecular evolution of pituitary growth hormone in Cetartiodactyla.</title>
        <authorList>
            <person name="Maniou Z."/>
            <person name="Wallis O.C."/>
            <person name="Wallis M."/>
        </authorList>
    </citation>
    <scope>NUCLEOTIDE SEQUENCE [GENOMIC DNA]</scope>
</reference>
<feature type="signal peptide" evidence="1">
    <location>
        <begin position="1"/>
        <end position="27"/>
    </location>
</feature>
<feature type="chain" id="PRO_0000032985" description="Somatotropin">
    <location>
        <begin position="28"/>
        <end position="217"/>
    </location>
</feature>
<feature type="binding site" evidence="1">
    <location>
        <position position="46"/>
    </location>
    <ligand>
        <name>Zn(2+)</name>
        <dbReference type="ChEBI" id="CHEBI:29105"/>
    </ligand>
</feature>
<feature type="binding site" evidence="1">
    <location>
        <position position="199"/>
    </location>
    <ligand>
        <name>Zn(2+)</name>
        <dbReference type="ChEBI" id="CHEBI:29105"/>
    </ligand>
</feature>
<feature type="modified residue" description="Phosphoserine" evidence="2">
    <location>
        <position position="132"/>
    </location>
</feature>
<feature type="disulfide bond" evidence="1">
    <location>
        <begin position="79"/>
        <end position="190"/>
    </location>
</feature>
<feature type="disulfide bond" evidence="1">
    <location>
        <begin position="207"/>
        <end position="215"/>
    </location>
</feature>
<comment type="function">
    <text evidence="1">Plays an important role in growth control. Its major role in stimulating body growth is to stimulate the liver and other tissues to secrete IGF1. It stimulates both the differentiation and proliferation of myoblasts. It also stimulates amino acid uptake and protein synthesis in muscle and other tissues (By similarity).</text>
</comment>
<comment type="subcellular location">
    <subcellularLocation>
        <location>Secreted</location>
    </subcellularLocation>
</comment>
<comment type="similarity">
    <text evidence="3">Belongs to the somatotropin/prolactin family.</text>
</comment>
<gene>
    <name type="primary">GH1</name>
</gene>
<gene>
    <name type="primary">GH2</name>
</gene>
<organism>
    <name type="scientific">Giraffa camelopardalis</name>
    <name type="common">Giraffe</name>
    <dbReference type="NCBI Taxonomy" id="9894"/>
    <lineage>
        <taxon>Eukaryota</taxon>
        <taxon>Metazoa</taxon>
        <taxon>Chordata</taxon>
        <taxon>Craniata</taxon>
        <taxon>Vertebrata</taxon>
        <taxon>Euteleostomi</taxon>
        <taxon>Mammalia</taxon>
        <taxon>Eutheria</taxon>
        <taxon>Laurasiatheria</taxon>
        <taxon>Artiodactyla</taxon>
        <taxon>Ruminantia</taxon>
        <taxon>Pecora</taxon>
        <taxon>Giraffidae</taxon>
        <taxon>Giraffa</taxon>
    </lineage>
</organism>
<protein>
    <recommendedName>
        <fullName>Somatotropin</fullName>
    </recommendedName>
    <alternativeName>
        <fullName>Growth hormone</fullName>
    </alternativeName>
</protein>
<sequence>MMAAGPRTSLLLAFALLCLPWTQMVGAFPAMSLSGLFANAVLRAQHLHQLAADTFKEFERTYIPEGQRYSIQNTQVAFCFSETIPAPTGKNEAQQKSDLELLRISLLLIQSWLGPLQFLSRVFSNSLVFGTSDRVYEKLKDLEEGILALMRELEDGTPRAGQILKQTYDKFDTNMRSDDALLKNYGLLSCFRKDLHKTETYLRVMKCRRFGEASCAF</sequence>
<name>SOMA_GIRCA</name>
<evidence type="ECO:0000250" key="1"/>
<evidence type="ECO:0000250" key="2">
    <source>
        <dbReference type="UniProtKB" id="P01241"/>
    </source>
</evidence>
<evidence type="ECO:0000305" key="3"/>
<proteinExistence type="inferred from homology"/>
<dbReference type="EMBL" id="AJ575420">
    <property type="protein sequence ID" value="CAE01392.1"/>
    <property type="molecule type" value="Genomic_DNA"/>
</dbReference>
<dbReference type="EMBL" id="AJ575421">
    <property type="protein sequence ID" value="CAE01393.1"/>
    <property type="molecule type" value="Genomic_DNA"/>
</dbReference>
<dbReference type="SMR" id="Q7YQD2"/>
<dbReference type="GO" id="GO:0005615">
    <property type="term" value="C:extracellular space"/>
    <property type="evidence" value="ECO:0000250"/>
    <property type="project" value="AgBase"/>
</dbReference>
<dbReference type="GO" id="GO:0008083">
    <property type="term" value="F:growth factor activity"/>
    <property type="evidence" value="ECO:0007669"/>
    <property type="project" value="TreeGrafter"/>
</dbReference>
<dbReference type="GO" id="GO:0005131">
    <property type="term" value="F:growth hormone receptor binding"/>
    <property type="evidence" value="ECO:0007669"/>
    <property type="project" value="InterPro"/>
</dbReference>
<dbReference type="GO" id="GO:0005179">
    <property type="term" value="F:hormone activity"/>
    <property type="evidence" value="ECO:0007669"/>
    <property type="project" value="UniProtKB-KW"/>
</dbReference>
<dbReference type="GO" id="GO:0046872">
    <property type="term" value="F:metal ion binding"/>
    <property type="evidence" value="ECO:0007669"/>
    <property type="project" value="UniProtKB-KW"/>
</dbReference>
<dbReference type="GO" id="GO:0048513">
    <property type="term" value="P:animal organ development"/>
    <property type="evidence" value="ECO:0007669"/>
    <property type="project" value="TreeGrafter"/>
</dbReference>
<dbReference type="GO" id="GO:0060396">
    <property type="term" value="P:growth hormone receptor signaling pathway"/>
    <property type="evidence" value="ECO:0007669"/>
    <property type="project" value="TreeGrafter"/>
</dbReference>
<dbReference type="GO" id="GO:0030073">
    <property type="term" value="P:insulin secretion"/>
    <property type="evidence" value="ECO:0000250"/>
    <property type="project" value="AgBase"/>
</dbReference>
<dbReference type="GO" id="GO:0045927">
    <property type="term" value="P:positive regulation of growth"/>
    <property type="evidence" value="ECO:0007669"/>
    <property type="project" value="TreeGrafter"/>
</dbReference>
<dbReference type="GO" id="GO:0046427">
    <property type="term" value="P:positive regulation of receptor signaling pathway via JAK-STAT"/>
    <property type="evidence" value="ECO:0007669"/>
    <property type="project" value="TreeGrafter"/>
</dbReference>
<dbReference type="GO" id="GO:0031667">
    <property type="term" value="P:response to nutrient levels"/>
    <property type="evidence" value="ECO:0007669"/>
    <property type="project" value="TreeGrafter"/>
</dbReference>
<dbReference type="CDD" id="cd10285">
    <property type="entry name" value="somatotropin_like"/>
    <property type="match status" value="1"/>
</dbReference>
<dbReference type="FunFam" id="1.20.1250.10:FF:000002">
    <property type="entry name" value="Growth hormone"/>
    <property type="match status" value="1"/>
</dbReference>
<dbReference type="Gene3D" id="1.20.1250.10">
    <property type="match status" value="1"/>
</dbReference>
<dbReference type="InterPro" id="IPR009079">
    <property type="entry name" value="4_helix_cytokine-like_core"/>
</dbReference>
<dbReference type="InterPro" id="IPR034975">
    <property type="entry name" value="Somatotropin"/>
</dbReference>
<dbReference type="InterPro" id="IPR001400">
    <property type="entry name" value="Somatotropin/Prolactin"/>
</dbReference>
<dbReference type="InterPro" id="IPR018116">
    <property type="entry name" value="Somatotropin_CS"/>
</dbReference>
<dbReference type="PANTHER" id="PTHR11417:SF2">
    <property type="entry name" value="SOMATOTROPIN"/>
    <property type="match status" value="1"/>
</dbReference>
<dbReference type="PANTHER" id="PTHR11417">
    <property type="entry name" value="SOMATOTROPIN,PROLACTIN"/>
    <property type="match status" value="1"/>
</dbReference>
<dbReference type="Pfam" id="PF00103">
    <property type="entry name" value="Hormone_1"/>
    <property type="match status" value="1"/>
</dbReference>
<dbReference type="PRINTS" id="PR00836">
    <property type="entry name" value="SOMATOTROPIN"/>
</dbReference>
<dbReference type="SUPFAM" id="SSF47266">
    <property type="entry name" value="4-helical cytokines"/>
    <property type="match status" value="1"/>
</dbReference>
<dbReference type="PROSITE" id="PS00266">
    <property type="entry name" value="SOMATOTROPIN_1"/>
    <property type="match status" value="1"/>
</dbReference>
<dbReference type="PROSITE" id="PS00338">
    <property type="entry name" value="SOMATOTROPIN_2"/>
    <property type="match status" value="1"/>
</dbReference>
<keyword id="KW-1015">Disulfide bond</keyword>
<keyword id="KW-0372">Hormone</keyword>
<keyword id="KW-0479">Metal-binding</keyword>
<keyword id="KW-0597">Phosphoprotein</keyword>
<keyword id="KW-0964">Secreted</keyword>
<keyword id="KW-0732">Signal</keyword>
<keyword id="KW-0862">Zinc</keyword>
<accession>Q7YQD2</accession>